<evidence type="ECO:0000305" key="1"/>
<reference key="1">
    <citation type="submission" date="2000-06" db="EMBL/GenBank/DDBJ databases">
        <title>Structural analysis of Arabidopsis thaliana chromosome 5. XI.</title>
        <authorList>
            <person name="Kaneko T."/>
            <person name="Katoh T."/>
            <person name="Asamizu E."/>
            <person name="Sato S."/>
            <person name="Nakamura Y."/>
            <person name="Kotani H."/>
            <person name="Tabata S."/>
        </authorList>
    </citation>
    <scope>NUCLEOTIDE SEQUENCE [LARGE SCALE GENOMIC DNA]</scope>
    <source>
        <strain>cv. Columbia</strain>
    </source>
</reference>
<reference key="2">
    <citation type="journal article" date="2017" name="Plant J.">
        <title>Araport11: a complete reannotation of the Arabidopsis thaliana reference genome.</title>
        <authorList>
            <person name="Cheng C.Y."/>
            <person name="Krishnakumar V."/>
            <person name="Chan A.P."/>
            <person name="Thibaud-Nissen F."/>
            <person name="Schobel S."/>
            <person name="Town C.D."/>
        </authorList>
    </citation>
    <scope>GENOME REANNOTATION</scope>
    <source>
        <strain>cv. Columbia</strain>
    </source>
</reference>
<reference key="3">
    <citation type="journal article" date="2004" name="Plant Cell">
        <title>Genome-wide analysis of Arabidopsis pentatricopeptide repeat proteins reveals their essential role in organelle biogenesis.</title>
        <authorList>
            <person name="Lurin C."/>
            <person name="Andres C."/>
            <person name="Aubourg S."/>
            <person name="Bellaoui M."/>
            <person name="Bitton F."/>
            <person name="Bruyere C."/>
            <person name="Caboche M."/>
            <person name="Debast C."/>
            <person name="Gualberto J."/>
            <person name="Hoffmann B."/>
            <person name="Lecharny A."/>
            <person name="Le Ret M."/>
            <person name="Martin-Magniette M.-L."/>
            <person name="Mireau H."/>
            <person name="Peeters N."/>
            <person name="Renou J.-P."/>
            <person name="Szurek B."/>
            <person name="Taconnat L."/>
            <person name="Small I."/>
        </authorList>
    </citation>
    <scope>GENE FAMILY</scope>
</reference>
<feature type="chain" id="PRO_0000363504" description="Pentatricopeptide repeat-containing protein At5g06540">
    <location>
        <begin position="1"/>
        <end position="622"/>
    </location>
</feature>
<feature type="repeat" description="PPR 1">
    <location>
        <begin position="81"/>
        <end position="115"/>
    </location>
</feature>
<feature type="repeat" description="PPR 2">
    <location>
        <begin position="116"/>
        <end position="150"/>
    </location>
</feature>
<feature type="repeat" description="PPR 3">
    <location>
        <begin position="151"/>
        <end position="181"/>
    </location>
</feature>
<feature type="repeat" description="PPR 4">
    <location>
        <begin position="182"/>
        <end position="212"/>
    </location>
</feature>
<feature type="repeat" description="PPR 5">
    <location>
        <begin position="213"/>
        <end position="247"/>
    </location>
</feature>
<feature type="repeat" description="PPR 6">
    <location>
        <begin position="248"/>
        <end position="282"/>
    </location>
</feature>
<feature type="repeat" description="PPR 7">
    <location>
        <begin position="283"/>
        <end position="313"/>
    </location>
</feature>
<feature type="repeat" description="PPR 8">
    <location>
        <begin position="314"/>
        <end position="348"/>
    </location>
</feature>
<feature type="repeat" description="PPR 9">
    <location>
        <begin position="349"/>
        <end position="384"/>
    </location>
</feature>
<feature type="repeat" description="PPR 10">
    <location>
        <begin position="385"/>
        <end position="419"/>
    </location>
</feature>
<feature type="region of interest" description="Type E motif">
    <location>
        <begin position="420"/>
        <end position="495"/>
    </location>
</feature>
<feature type="region of interest" description="Type E(+) motif">
    <location>
        <begin position="496"/>
        <end position="527"/>
    </location>
</feature>
<feature type="region of interest" description="Type DYW motif">
    <location>
        <begin position="528"/>
        <end position="622"/>
    </location>
</feature>
<comment type="similarity">
    <text evidence="1">Belongs to the PPR family. PCMP-H subfamily.</text>
</comment>
<comment type="online information" name="Pentatricopeptide repeat proteins">
    <link uri="https://ppr.plantenergy.uwa.edu.au"/>
</comment>
<gene>
    <name type="primary">PCMP-H88</name>
    <name type="ordered locus">At5g06540</name>
    <name type="ORF">F15M7.7</name>
</gene>
<dbReference type="EMBL" id="AP002543">
    <property type="protein sequence ID" value="BAB11403.1"/>
    <property type="molecule type" value="Genomic_DNA"/>
</dbReference>
<dbReference type="EMBL" id="CP002688">
    <property type="protein sequence ID" value="AED91032.1"/>
    <property type="molecule type" value="Genomic_DNA"/>
</dbReference>
<dbReference type="RefSeq" id="NP_196272.1">
    <property type="nucleotide sequence ID" value="NM_120737.2"/>
</dbReference>
<dbReference type="SMR" id="Q9FG16"/>
<dbReference type="FunCoup" id="Q9FG16">
    <property type="interactions" value="74"/>
</dbReference>
<dbReference type="STRING" id="3702.Q9FG16"/>
<dbReference type="PaxDb" id="3702-AT5G06540.1"/>
<dbReference type="ProteomicsDB" id="249257"/>
<dbReference type="EnsemblPlants" id="AT5G06540.1">
    <property type="protein sequence ID" value="AT5G06540.1"/>
    <property type="gene ID" value="AT5G06540"/>
</dbReference>
<dbReference type="GeneID" id="830542"/>
<dbReference type="Gramene" id="AT5G06540.1">
    <property type="protein sequence ID" value="AT5G06540.1"/>
    <property type="gene ID" value="AT5G06540"/>
</dbReference>
<dbReference type="KEGG" id="ath:AT5G06540"/>
<dbReference type="Araport" id="AT5G06540"/>
<dbReference type="TAIR" id="AT5G06540"/>
<dbReference type="eggNOG" id="KOG4197">
    <property type="taxonomic scope" value="Eukaryota"/>
</dbReference>
<dbReference type="HOGENOM" id="CLU_002706_15_10_1"/>
<dbReference type="InParanoid" id="Q9FG16"/>
<dbReference type="OMA" id="YARANKW"/>
<dbReference type="PhylomeDB" id="Q9FG16"/>
<dbReference type="PRO" id="PR:Q9FG16"/>
<dbReference type="Proteomes" id="UP000006548">
    <property type="component" value="Chromosome 5"/>
</dbReference>
<dbReference type="ExpressionAtlas" id="Q9FG16">
    <property type="expression patterns" value="baseline and differential"/>
</dbReference>
<dbReference type="GO" id="GO:0003723">
    <property type="term" value="F:RNA binding"/>
    <property type="evidence" value="ECO:0007669"/>
    <property type="project" value="InterPro"/>
</dbReference>
<dbReference type="GO" id="GO:0008270">
    <property type="term" value="F:zinc ion binding"/>
    <property type="evidence" value="ECO:0007669"/>
    <property type="project" value="InterPro"/>
</dbReference>
<dbReference type="GO" id="GO:0009451">
    <property type="term" value="P:RNA modification"/>
    <property type="evidence" value="ECO:0007669"/>
    <property type="project" value="InterPro"/>
</dbReference>
<dbReference type="FunFam" id="1.25.40.10:FF:000333">
    <property type="entry name" value="Pentatricopeptide repeat-containing protein"/>
    <property type="match status" value="1"/>
</dbReference>
<dbReference type="FunFam" id="1.25.40.10:FF:000690">
    <property type="entry name" value="Pentatricopeptide repeat-containing protein"/>
    <property type="match status" value="1"/>
</dbReference>
<dbReference type="FunFam" id="1.25.40.10:FF:001638">
    <property type="entry name" value="Pentatricopeptide repeat-containing protein At5g06540"/>
    <property type="match status" value="1"/>
</dbReference>
<dbReference type="Gene3D" id="1.25.40.10">
    <property type="entry name" value="Tetratricopeptide repeat domain"/>
    <property type="match status" value="3"/>
</dbReference>
<dbReference type="InterPro" id="IPR032867">
    <property type="entry name" value="DYW_dom"/>
</dbReference>
<dbReference type="InterPro" id="IPR046848">
    <property type="entry name" value="E_motif"/>
</dbReference>
<dbReference type="InterPro" id="IPR002885">
    <property type="entry name" value="Pentatricopeptide_rpt"/>
</dbReference>
<dbReference type="InterPro" id="IPR046960">
    <property type="entry name" value="PPR_At4g14850-like_plant"/>
</dbReference>
<dbReference type="InterPro" id="IPR011990">
    <property type="entry name" value="TPR-like_helical_dom_sf"/>
</dbReference>
<dbReference type="NCBIfam" id="TIGR00756">
    <property type="entry name" value="PPR"/>
    <property type="match status" value="4"/>
</dbReference>
<dbReference type="PANTHER" id="PTHR47926:SF537">
    <property type="entry name" value="PENTACOTRIPEPTIDE-REPEAT REGION OF PRORP DOMAIN-CONTAINING PROTEIN"/>
    <property type="match status" value="1"/>
</dbReference>
<dbReference type="PANTHER" id="PTHR47926">
    <property type="entry name" value="PENTATRICOPEPTIDE REPEAT-CONTAINING PROTEIN"/>
    <property type="match status" value="1"/>
</dbReference>
<dbReference type="Pfam" id="PF14432">
    <property type="entry name" value="DYW_deaminase"/>
    <property type="match status" value="1"/>
</dbReference>
<dbReference type="Pfam" id="PF20431">
    <property type="entry name" value="E_motif"/>
    <property type="match status" value="1"/>
</dbReference>
<dbReference type="Pfam" id="PF01535">
    <property type="entry name" value="PPR"/>
    <property type="match status" value="5"/>
</dbReference>
<dbReference type="PROSITE" id="PS51375">
    <property type="entry name" value="PPR"/>
    <property type="match status" value="11"/>
</dbReference>
<accession>Q9FG16</accession>
<name>PP367_ARATH</name>
<proteinExistence type="inferred from homology"/>
<organism>
    <name type="scientific">Arabidopsis thaliana</name>
    <name type="common">Mouse-ear cress</name>
    <dbReference type="NCBI Taxonomy" id="3702"/>
    <lineage>
        <taxon>Eukaryota</taxon>
        <taxon>Viridiplantae</taxon>
        <taxon>Streptophyta</taxon>
        <taxon>Embryophyta</taxon>
        <taxon>Tracheophyta</taxon>
        <taxon>Spermatophyta</taxon>
        <taxon>Magnoliopsida</taxon>
        <taxon>eudicotyledons</taxon>
        <taxon>Gunneridae</taxon>
        <taxon>Pentapetalae</taxon>
        <taxon>rosids</taxon>
        <taxon>malvids</taxon>
        <taxon>Brassicales</taxon>
        <taxon>Brassicaceae</taxon>
        <taxon>Camelineae</taxon>
        <taxon>Arabidopsis</taxon>
    </lineage>
</organism>
<protein>
    <recommendedName>
        <fullName>Pentatricopeptide repeat-containing protein At5g06540</fullName>
    </recommendedName>
</protein>
<sequence length="622" mass="70495">MSNIVLNTLRFKHPKLALLQSCSSFSDLKIIHGFLLRTHLISDVFVASRLLALCVDDSTFNKPTNLLGYAYGIFSQIQNPNLFVFNLLIRCFSTGAEPSKAFGFYTQMLKSRIWPDNITFPFLIKASSEMECVLVGEQTHSQIVRFGFQNDVYVENSLVHMYANCGFIAAAGRIFGQMGFRDVVSWTSMVAGYCKCGMVENAREMFDEMPHRNLFTWSIMINGYAKNNCFEKAIDLFEFMKREGVVANETVMVSVISSCAHLGALEFGERAYEYVVKSHMTVNLILGTALVDMFWRCGDIEKAIHVFEGLPETDSLSWSSIIKGLAVHGHAHKAMHYFSQMISLGFIPRDVTFTAVLSACSHGGLVEKGLEIYENMKKDHGIEPRLEHYGCIVDMLGRAGKLAEAENFILKMHVKPNAPILGALLGACKIYKNTEVAERVGNMLIKVKPEHSGYYVLLSNIYACAGQWDKIESLRDMMKEKLVKKPPGWSLIEIDGKINKFTMGDDQKHPEMGKIRRKWEEILGKIRLIGYKGNTGDAFFDVDEEEKESSIHMHSEKLAIAYGMMKTKPGTTIRIVKNLRVCEDCHTVTKLISEVYGRELIVRDRNRFHHFRNGVCSCRDYW</sequence>
<keyword id="KW-1185">Reference proteome</keyword>
<keyword id="KW-0677">Repeat</keyword>